<comment type="function">
    <text evidence="1">Catalyzes the NAD(P)H-dependent reduction of dihydroxyacetonephosphate (DHAP or glycerone phosphate) to glycerol 1-phosphate (G1P). The G1P thus generated is used as the glycerophosphate backbone of phospholipids in the cellular membranes of Archaea.</text>
</comment>
<comment type="catalytic activity">
    <reaction evidence="1">
        <text>sn-glycerol 1-phosphate + NAD(+) = dihydroxyacetone phosphate + NADH + H(+)</text>
        <dbReference type="Rhea" id="RHEA:21412"/>
        <dbReference type="ChEBI" id="CHEBI:15378"/>
        <dbReference type="ChEBI" id="CHEBI:57540"/>
        <dbReference type="ChEBI" id="CHEBI:57642"/>
        <dbReference type="ChEBI" id="CHEBI:57685"/>
        <dbReference type="ChEBI" id="CHEBI:57945"/>
        <dbReference type="EC" id="1.1.1.261"/>
    </reaction>
</comment>
<comment type="catalytic activity">
    <reaction evidence="1">
        <text>sn-glycerol 1-phosphate + NADP(+) = dihydroxyacetone phosphate + NADPH + H(+)</text>
        <dbReference type="Rhea" id="RHEA:21416"/>
        <dbReference type="ChEBI" id="CHEBI:15378"/>
        <dbReference type="ChEBI" id="CHEBI:57642"/>
        <dbReference type="ChEBI" id="CHEBI:57685"/>
        <dbReference type="ChEBI" id="CHEBI:57783"/>
        <dbReference type="ChEBI" id="CHEBI:58349"/>
        <dbReference type="EC" id="1.1.1.261"/>
    </reaction>
</comment>
<comment type="cofactor">
    <cofactor evidence="1">
        <name>Zn(2+)</name>
        <dbReference type="ChEBI" id="CHEBI:29105"/>
    </cofactor>
    <text evidence="1">Binds 1 zinc ion per subunit.</text>
</comment>
<comment type="pathway">
    <text evidence="1">Membrane lipid metabolism; glycerophospholipid metabolism.</text>
</comment>
<comment type="subunit">
    <text evidence="1">Homodimer.</text>
</comment>
<comment type="subcellular location">
    <subcellularLocation>
        <location evidence="1">Cytoplasm</location>
    </subcellularLocation>
</comment>
<comment type="similarity">
    <text evidence="1">Belongs to the glycerol-1-phosphate dehydrogenase family.</text>
</comment>
<reference key="1">
    <citation type="journal article" date="2009" name="Proc. Natl. Acad. Sci. U.S.A.">
        <title>Biogeography of the Sulfolobus islandicus pan-genome.</title>
        <authorList>
            <person name="Reno M.L."/>
            <person name="Held N.L."/>
            <person name="Fields C.J."/>
            <person name="Burke P.V."/>
            <person name="Whitaker R.J."/>
        </authorList>
    </citation>
    <scope>NUCLEOTIDE SEQUENCE [LARGE SCALE GENOMIC DNA]</scope>
    <source>
        <strain>L.S.2.15 / Lassen #1</strain>
    </source>
</reference>
<evidence type="ECO:0000255" key="1">
    <source>
        <dbReference type="HAMAP-Rule" id="MF_00497"/>
    </source>
</evidence>
<accession>C3MQ22</accession>
<protein>
    <recommendedName>
        <fullName evidence="1">Glycerol-1-phosphate dehydrogenase [NAD(P)+]</fullName>
        <shortName evidence="1">G1P dehydrogenase</shortName>
        <shortName evidence="1">G1PDH</shortName>
        <ecNumber evidence="1">1.1.1.261</ecNumber>
    </recommendedName>
    <alternativeName>
        <fullName evidence="1">Enantiomeric glycerophosphate synthase</fullName>
    </alternativeName>
    <alternativeName>
        <fullName evidence="1">sn-glycerol-1-phosphate dehydrogenase</fullName>
    </alternativeName>
</protein>
<sequence length="351" mass="38604">MNVKEHVISLPRRVFVGHDIIYDISIYFSQLGITSPFLIVTGTKYTKKIADRVIENLPKNAKYEVIEIDTATLDDVYKVEEVVKKVNPNILLGIGGGKVIDVTKYAAFRNNLEFVSIPTSPSHDGITSPFASIKGLQKPVSVKAKEPLAIIVDIEILSLSPRRLINAGIGDTIGKIIAVRDWRLAAKLRGEYYGDYTASLALMSAKHAFQCTKIINKDIKYGVRMLIEALISSGVAMGMAGSTRPASGSEHLFAHAVELLHPEGVLHGELVGLGTIIMAYLHGINWKIIRDRLKKIGFPVKAKDLGLSDEEVIKALTIAHTIRPERYTILGDRGLTWSSAEKIARVTKIID</sequence>
<proteinExistence type="inferred from homology"/>
<dbReference type="EC" id="1.1.1.261" evidence="1"/>
<dbReference type="EMBL" id="CP001399">
    <property type="protein sequence ID" value="ACP35485.1"/>
    <property type="molecule type" value="Genomic_DNA"/>
</dbReference>
<dbReference type="RefSeq" id="WP_012713714.1">
    <property type="nucleotide sequence ID" value="NC_012589.1"/>
</dbReference>
<dbReference type="SMR" id="C3MQ22"/>
<dbReference type="GeneID" id="7799102"/>
<dbReference type="KEGG" id="sis:LS215_1478"/>
<dbReference type="HOGENOM" id="CLU_038362_0_0_2"/>
<dbReference type="OrthoDB" id="8656at2157"/>
<dbReference type="UniPathway" id="UPA00940"/>
<dbReference type="Proteomes" id="UP000001747">
    <property type="component" value="Chromosome"/>
</dbReference>
<dbReference type="GO" id="GO:0005737">
    <property type="term" value="C:cytoplasm"/>
    <property type="evidence" value="ECO:0007669"/>
    <property type="project" value="UniProtKB-SubCell"/>
</dbReference>
<dbReference type="GO" id="GO:0106357">
    <property type="term" value="F:glycerol-1-phosphate dehydrogenase (NAD+) activity"/>
    <property type="evidence" value="ECO:0007669"/>
    <property type="project" value="RHEA"/>
</dbReference>
<dbReference type="GO" id="GO:0106358">
    <property type="term" value="F:glycerol-1-phosphate dehydrogenase (NADP+) activity"/>
    <property type="evidence" value="ECO:0007669"/>
    <property type="project" value="RHEA"/>
</dbReference>
<dbReference type="GO" id="GO:0046872">
    <property type="term" value="F:metal ion binding"/>
    <property type="evidence" value="ECO:0007669"/>
    <property type="project" value="UniProtKB-KW"/>
</dbReference>
<dbReference type="GO" id="GO:0006650">
    <property type="term" value="P:glycerophospholipid metabolic process"/>
    <property type="evidence" value="ECO:0007669"/>
    <property type="project" value="UniProtKB-UniRule"/>
</dbReference>
<dbReference type="GO" id="GO:0008654">
    <property type="term" value="P:phospholipid biosynthetic process"/>
    <property type="evidence" value="ECO:0007669"/>
    <property type="project" value="UniProtKB-KW"/>
</dbReference>
<dbReference type="CDD" id="cd08173">
    <property type="entry name" value="Gro1PDH"/>
    <property type="match status" value="1"/>
</dbReference>
<dbReference type="Gene3D" id="3.40.50.1970">
    <property type="match status" value="1"/>
</dbReference>
<dbReference type="Gene3D" id="1.20.1090.10">
    <property type="entry name" value="Dehydroquinate synthase-like - alpha domain"/>
    <property type="match status" value="1"/>
</dbReference>
<dbReference type="HAMAP" id="MF_00497_A">
    <property type="entry name" value="G1P_dehydrogenase_A"/>
    <property type="match status" value="1"/>
</dbReference>
<dbReference type="InterPro" id="IPR023002">
    <property type="entry name" value="G1P_dehydrogenase_arc"/>
</dbReference>
<dbReference type="InterPro" id="IPR032837">
    <property type="entry name" value="G1PDH"/>
</dbReference>
<dbReference type="InterPro" id="IPR016205">
    <property type="entry name" value="Glycerol_DH"/>
</dbReference>
<dbReference type="NCBIfam" id="NF002022">
    <property type="entry name" value="PRK00843.1"/>
    <property type="match status" value="1"/>
</dbReference>
<dbReference type="PANTHER" id="PTHR43616">
    <property type="entry name" value="GLYCEROL DEHYDROGENASE"/>
    <property type="match status" value="1"/>
</dbReference>
<dbReference type="PANTHER" id="PTHR43616:SF5">
    <property type="entry name" value="GLYCEROL DEHYDROGENASE 1"/>
    <property type="match status" value="1"/>
</dbReference>
<dbReference type="Pfam" id="PF13685">
    <property type="entry name" value="Fe-ADH_2"/>
    <property type="match status" value="1"/>
</dbReference>
<dbReference type="PIRSF" id="PIRSF000112">
    <property type="entry name" value="Glycerol_dehydrogenase"/>
    <property type="match status" value="1"/>
</dbReference>
<dbReference type="SUPFAM" id="SSF56796">
    <property type="entry name" value="Dehydroquinate synthase-like"/>
    <property type="match status" value="1"/>
</dbReference>
<name>G1PDH_SACI2</name>
<keyword id="KW-0963">Cytoplasm</keyword>
<keyword id="KW-0444">Lipid biosynthesis</keyword>
<keyword id="KW-0443">Lipid metabolism</keyword>
<keyword id="KW-0479">Metal-binding</keyword>
<keyword id="KW-0520">NAD</keyword>
<keyword id="KW-0521">NADP</keyword>
<keyword id="KW-0560">Oxidoreductase</keyword>
<keyword id="KW-0594">Phospholipid biosynthesis</keyword>
<keyword id="KW-1208">Phospholipid metabolism</keyword>
<keyword id="KW-0862">Zinc</keyword>
<organism>
    <name type="scientific">Saccharolobus islandicus (strain L.S.2.15 / Lassen #1)</name>
    <name type="common">Sulfolobus islandicus</name>
    <dbReference type="NCBI Taxonomy" id="429572"/>
    <lineage>
        <taxon>Archaea</taxon>
        <taxon>Thermoproteota</taxon>
        <taxon>Thermoprotei</taxon>
        <taxon>Sulfolobales</taxon>
        <taxon>Sulfolobaceae</taxon>
        <taxon>Saccharolobus</taxon>
    </lineage>
</organism>
<gene>
    <name evidence="1" type="primary">egsA</name>
    <name type="ordered locus">LS215_1478</name>
</gene>
<feature type="chain" id="PRO_1000206478" description="Glycerol-1-phosphate dehydrogenase [NAD(P)+]">
    <location>
        <begin position="1"/>
        <end position="351"/>
    </location>
</feature>
<feature type="binding site" evidence="1">
    <location>
        <begin position="97"/>
        <end position="101"/>
    </location>
    <ligand>
        <name>NAD(+)</name>
        <dbReference type="ChEBI" id="CHEBI:57540"/>
    </ligand>
</feature>
<feature type="binding site" evidence="1">
    <location>
        <begin position="119"/>
        <end position="122"/>
    </location>
    <ligand>
        <name>NAD(+)</name>
        <dbReference type="ChEBI" id="CHEBI:57540"/>
    </ligand>
</feature>
<feature type="binding site" evidence="1">
    <location>
        <position position="124"/>
    </location>
    <ligand>
        <name>substrate</name>
    </ligand>
</feature>
<feature type="binding site" evidence="1">
    <location>
        <position position="128"/>
    </location>
    <ligand>
        <name>NAD(+)</name>
        <dbReference type="ChEBI" id="CHEBI:57540"/>
    </ligand>
</feature>
<feature type="binding site" evidence="1">
    <location>
        <position position="171"/>
    </location>
    <ligand>
        <name>substrate</name>
    </ligand>
</feature>
<feature type="binding site" evidence="1">
    <location>
        <position position="171"/>
    </location>
    <ligand>
        <name>Zn(2+)</name>
        <dbReference type="ChEBI" id="CHEBI:29105"/>
        <note>catalytic</note>
    </ligand>
</feature>
<feature type="binding site" evidence="1">
    <location>
        <position position="251"/>
    </location>
    <ligand>
        <name>Zn(2+)</name>
        <dbReference type="ChEBI" id="CHEBI:29105"/>
        <note>catalytic</note>
    </ligand>
</feature>
<feature type="binding site" evidence="1">
    <location>
        <position position="255"/>
    </location>
    <ligand>
        <name>substrate</name>
    </ligand>
</feature>
<feature type="binding site" evidence="1">
    <location>
        <position position="267"/>
    </location>
    <ligand>
        <name>Zn(2+)</name>
        <dbReference type="ChEBI" id="CHEBI:29105"/>
        <note>catalytic</note>
    </ligand>
</feature>